<sequence length="337" mass="36976">MGEDMRVVKVESKWPPIIVMVISQVAMGSVNALVKKALDVGVNHMIIGAYRIAISSFILAPIAYILEREIIPEITFRLMVDHFISGLLGASLMQFFYLLGLSYTSATVACALVSLMPAITFAFALILRTEKIKSLRTQAGMIKVMGTIICISGALFLTFYKGPHISNSHSHQEALPHNNNSDHNTKNWLLGCLYLTIGTVLISLWILFQGTLSIKYPCKFSSTCLMSIFAAFQCALLSLYKSRDVKDWIIDDRFVIGVIVYAGVIGQAMSTVSVTWGVKKLGAVFVSAIMPIALISASLFDFIILHTPLYLGSLIGSVGTITGLYVFLWGKNKDMEA</sequence>
<keyword id="KW-0472">Membrane</keyword>
<keyword id="KW-1185">Reference proteome</keyword>
<keyword id="KW-0677">Repeat</keyword>
<keyword id="KW-0812">Transmembrane</keyword>
<keyword id="KW-1133">Transmembrane helix</keyword>
<protein>
    <recommendedName>
        <fullName>WAT1-related protein At1g11460</fullName>
    </recommendedName>
</protein>
<comment type="subcellular location">
    <subcellularLocation>
        <location evidence="1">Membrane</location>
        <topology evidence="3">Multi-pass membrane protein</topology>
    </subcellularLocation>
</comment>
<comment type="similarity">
    <text evidence="3">Belongs to the drug/metabolite transporter (DMT) superfamily. Plant drug/metabolite exporter (P-DME) (TC 2.A.7.4) family.</text>
</comment>
<comment type="sequence caution" evidence="3">
    <conflict type="erroneous gene model prediction">
        <sequence resource="EMBL-CDS" id="AAF16631"/>
    </conflict>
</comment>
<evidence type="ECO:0000250" key="1"/>
<evidence type="ECO:0000255" key="2"/>
<evidence type="ECO:0000305" key="3"/>
<name>WTR4_ARATH</name>
<reference key="1">
    <citation type="journal article" date="2000" name="Nature">
        <title>Sequence and analysis of chromosome 1 of the plant Arabidopsis thaliana.</title>
        <authorList>
            <person name="Theologis A."/>
            <person name="Ecker J.R."/>
            <person name="Palm C.J."/>
            <person name="Federspiel N.A."/>
            <person name="Kaul S."/>
            <person name="White O."/>
            <person name="Alonso J."/>
            <person name="Altafi H."/>
            <person name="Araujo R."/>
            <person name="Bowman C.L."/>
            <person name="Brooks S.Y."/>
            <person name="Buehler E."/>
            <person name="Chan A."/>
            <person name="Chao Q."/>
            <person name="Chen H."/>
            <person name="Cheuk R.F."/>
            <person name="Chin C.W."/>
            <person name="Chung M.K."/>
            <person name="Conn L."/>
            <person name="Conway A.B."/>
            <person name="Conway A.R."/>
            <person name="Creasy T.H."/>
            <person name="Dewar K."/>
            <person name="Dunn P."/>
            <person name="Etgu P."/>
            <person name="Feldblyum T.V."/>
            <person name="Feng J.-D."/>
            <person name="Fong B."/>
            <person name="Fujii C.Y."/>
            <person name="Gill J.E."/>
            <person name="Goldsmith A.D."/>
            <person name="Haas B."/>
            <person name="Hansen N.F."/>
            <person name="Hughes B."/>
            <person name="Huizar L."/>
            <person name="Hunter J.L."/>
            <person name="Jenkins J."/>
            <person name="Johnson-Hopson C."/>
            <person name="Khan S."/>
            <person name="Khaykin E."/>
            <person name="Kim C.J."/>
            <person name="Koo H.L."/>
            <person name="Kremenetskaia I."/>
            <person name="Kurtz D.B."/>
            <person name="Kwan A."/>
            <person name="Lam B."/>
            <person name="Langin-Hooper S."/>
            <person name="Lee A."/>
            <person name="Lee J.M."/>
            <person name="Lenz C.A."/>
            <person name="Li J.H."/>
            <person name="Li Y.-P."/>
            <person name="Lin X."/>
            <person name="Liu S.X."/>
            <person name="Liu Z.A."/>
            <person name="Luros J.S."/>
            <person name="Maiti R."/>
            <person name="Marziali A."/>
            <person name="Militscher J."/>
            <person name="Miranda M."/>
            <person name="Nguyen M."/>
            <person name="Nierman W.C."/>
            <person name="Osborne B.I."/>
            <person name="Pai G."/>
            <person name="Peterson J."/>
            <person name="Pham P.K."/>
            <person name="Rizzo M."/>
            <person name="Rooney T."/>
            <person name="Rowley D."/>
            <person name="Sakano H."/>
            <person name="Salzberg S.L."/>
            <person name="Schwartz J.R."/>
            <person name="Shinn P."/>
            <person name="Southwick A.M."/>
            <person name="Sun H."/>
            <person name="Tallon L.J."/>
            <person name="Tambunga G."/>
            <person name="Toriumi M.J."/>
            <person name="Town C.D."/>
            <person name="Utterback T."/>
            <person name="Van Aken S."/>
            <person name="Vaysberg M."/>
            <person name="Vysotskaia V.S."/>
            <person name="Walker M."/>
            <person name="Wu D."/>
            <person name="Yu G."/>
            <person name="Fraser C.M."/>
            <person name="Venter J.C."/>
            <person name="Davis R.W."/>
        </authorList>
    </citation>
    <scope>NUCLEOTIDE SEQUENCE [LARGE SCALE GENOMIC DNA]</scope>
    <source>
        <strain>cv. Columbia</strain>
    </source>
</reference>
<reference key="2">
    <citation type="journal article" date="2017" name="Plant J.">
        <title>Araport11: a complete reannotation of the Arabidopsis thaliana reference genome.</title>
        <authorList>
            <person name="Cheng C.Y."/>
            <person name="Krishnakumar V."/>
            <person name="Chan A.P."/>
            <person name="Thibaud-Nissen F."/>
            <person name="Schobel S."/>
            <person name="Town C.D."/>
        </authorList>
    </citation>
    <scope>GENOME REANNOTATION</scope>
    <source>
        <strain>cv. Columbia</strain>
    </source>
</reference>
<dbReference type="EMBL" id="AC011661">
    <property type="protein sequence ID" value="AAF16631.1"/>
    <property type="status" value="ALT_SEQ"/>
    <property type="molecule type" value="Genomic_DNA"/>
</dbReference>
<dbReference type="EMBL" id="CP002684">
    <property type="protein sequence ID" value="AEE28739.1"/>
    <property type="molecule type" value="Genomic_DNA"/>
</dbReference>
<dbReference type="PIR" id="C86248">
    <property type="entry name" value="C86248"/>
</dbReference>
<dbReference type="RefSeq" id="NP_172613.1">
    <property type="nucleotide sequence ID" value="NM_101019.2"/>
</dbReference>
<dbReference type="SMR" id="F4I8W6"/>
<dbReference type="PaxDb" id="3702-AT1G11460.1"/>
<dbReference type="EnsemblPlants" id="AT1G11460.1">
    <property type="protein sequence ID" value="AT1G11460.1"/>
    <property type="gene ID" value="AT1G11460"/>
</dbReference>
<dbReference type="GeneID" id="837688"/>
<dbReference type="Gramene" id="AT1G11460.1">
    <property type="protein sequence ID" value="AT1G11460.1"/>
    <property type="gene ID" value="AT1G11460"/>
</dbReference>
<dbReference type="KEGG" id="ath:AT1G11460"/>
<dbReference type="Araport" id="AT1G11460"/>
<dbReference type="TAIR" id="AT1G11460">
    <property type="gene designation" value="UMAMIT26"/>
</dbReference>
<dbReference type="eggNOG" id="ENOG502QWIP">
    <property type="taxonomic scope" value="Eukaryota"/>
</dbReference>
<dbReference type="HOGENOM" id="CLU_025359_1_0_1"/>
<dbReference type="InParanoid" id="F4I8W6"/>
<dbReference type="OMA" id="VKDWIID"/>
<dbReference type="PRO" id="PR:F4I8W6"/>
<dbReference type="Proteomes" id="UP000006548">
    <property type="component" value="Chromosome 1"/>
</dbReference>
<dbReference type="ExpressionAtlas" id="F4I8W6">
    <property type="expression patterns" value="baseline and differential"/>
</dbReference>
<dbReference type="GO" id="GO:0016020">
    <property type="term" value="C:membrane"/>
    <property type="evidence" value="ECO:0007669"/>
    <property type="project" value="UniProtKB-SubCell"/>
</dbReference>
<dbReference type="GO" id="GO:0022857">
    <property type="term" value="F:transmembrane transporter activity"/>
    <property type="evidence" value="ECO:0007669"/>
    <property type="project" value="InterPro"/>
</dbReference>
<dbReference type="InterPro" id="IPR000620">
    <property type="entry name" value="EamA_dom"/>
</dbReference>
<dbReference type="InterPro" id="IPR030184">
    <property type="entry name" value="WAT1-related"/>
</dbReference>
<dbReference type="PANTHER" id="PTHR31218">
    <property type="entry name" value="WAT1-RELATED PROTEIN"/>
    <property type="match status" value="1"/>
</dbReference>
<dbReference type="Pfam" id="PF00892">
    <property type="entry name" value="EamA"/>
    <property type="match status" value="2"/>
</dbReference>
<dbReference type="SUPFAM" id="SSF103481">
    <property type="entry name" value="Multidrug resistance efflux transporter EmrE"/>
    <property type="match status" value="1"/>
</dbReference>
<feature type="chain" id="PRO_0000421312" description="WAT1-related protein At1g11460">
    <location>
        <begin position="1"/>
        <end position="337"/>
    </location>
</feature>
<feature type="transmembrane region" description="Helical" evidence="2">
    <location>
        <begin position="14"/>
        <end position="34"/>
    </location>
</feature>
<feature type="transmembrane region" description="Helical" evidence="2">
    <location>
        <begin position="46"/>
        <end position="66"/>
    </location>
</feature>
<feature type="transmembrane region" description="Helical" evidence="2">
    <location>
        <begin position="83"/>
        <end position="103"/>
    </location>
</feature>
<feature type="transmembrane region" description="Helical" evidence="2">
    <location>
        <begin position="107"/>
        <end position="127"/>
    </location>
</feature>
<feature type="transmembrane region" description="Helical" evidence="2">
    <location>
        <begin position="139"/>
        <end position="159"/>
    </location>
</feature>
<feature type="transmembrane region" description="Helical" evidence="2">
    <location>
        <begin position="188"/>
        <end position="208"/>
    </location>
</feature>
<feature type="transmembrane region" description="Helical" evidence="2">
    <location>
        <begin position="220"/>
        <end position="240"/>
    </location>
</feature>
<feature type="transmembrane region" description="Helical" evidence="2">
    <location>
        <begin position="254"/>
        <end position="274"/>
    </location>
</feature>
<feature type="transmembrane region" description="Helical" evidence="2">
    <location>
        <begin position="284"/>
        <end position="304"/>
    </location>
</feature>
<feature type="transmembrane region" description="Helical" evidence="2">
    <location>
        <begin position="309"/>
        <end position="329"/>
    </location>
</feature>
<feature type="domain" description="EamA 1">
    <location>
        <begin position="27"/>
        <end position="157"/>
    </location>
</feature>
<feature type="domain" description="EamA 2">
    <location>
        <begin position="220"/>
        <end position="328"/>
    </location>
</feature>
<accession>F4I8W6</accession>
<accession>Q9LPY8</accession>
<gene>
    <name type="ordered locus">At1g11460</name>
    <name type="ORF">T23J18.13</name>
</gene>
<proteinExistence type="inferred from homology"/>
<organism>
    <name type="scientific">Arabidopsis thaliana</name>
    <name type="common">Mouse-ear cress</name>
    <dbReference type="NCBI Taxonomy" id="3702"/>
    <lineage>
        <taxon>Eukaryota</taxon>
        <taxon>Viridiplantae</taxon>
        <taxon>Streptophyta</taxon>
        <taxon>Embryophyta</taxon>
        <taxon>Tracheophyta</taxon>
        <taxon>Spermatophyta</taxon>
        <taxon>Magnoliopsida</taxon>
        <taxon>eudicotyledons</taxon>
        <taxon>Gunneridae</taxon>
        <taxon>Pentapetalae</taxon>
        <taxon>rosids</taxon>
        <taxon>malvids</taxon>
        <taxon>Brassicales</taxon>
        <taxon>Brassicaceae</taxon>
        <taxon>Camelineae</taxon>
        <taxon>Arabidopsis</taxon>
    </lineage>
</organism>